<accession>A0KWN7</accession>
<protein>
    <recommendedName>
        <fullName evidence="1">3-phosphoshikimate 1-carboxyvinyltransferase</fullName>
        <ecNumber evidence="1">2.5.1.19</ecNumber>
    </recommendedName>
    <alternativeName>
        <fullName evidence="1">5-enolpyruvylshikimate-3-phosphate synthase</fullName>
        <shortName evidence="1">EPSP synthase</shortName>
        <shortName evidence="1">EPSPS</shortName>
    </alternativeName>
</protein>
<gene>
    <name evidence="1" type="primary">aroA</name>
    <name type="ordered locus">Shewana3_1975</name>
</gene>
<organism>
    <name type="scientific">Shewanella sp. (strain ANA-3)</name>
    <dbReference type="NCBI Taxonomy" id="94122"/>
    <lineage>
        <taxon>Bacteria</taxon>
        <taxon>Pseudomonadati</taxon>
        <taxon>Pseudomonadota</taxon>
        <taxon>Gammaproteobacteria</taxon>
        <taxon>Alteromonadales</taxon>
        <taxon>Shewanellaceae</taxon>
        <taxon>Shewanella</taxon>
    </lineage>
</organism>
<comment type="function">
    <text evidence="1">Catalyzes the transfer of the enolpyruvyl moiety of phosphoenolpyruvate (PEP) to the 5-hydroxyl of shikimate-3-phosphate (S3P) to produce enolpyruvyl shikimate-3-phosphate and inorganic phosphate.</text>
</comment>
<comment type="catalytic activity">
    <reaction evidence="1">
        <text>3-phosphoshikimate + phosphoenolpyruvate = 5-O-(1-carboxyvinyl)-3-phosphoshikimate + phosphate</text>
        <dbReference type="Rhea" id="RHEA:21256"/>
        <dbReference type="ChEBI" id="CHEBI:43474"/>
        <dbReference type="ChEBI" id="CHEBI:57701"/>
        <dbReference type="ChEBI" id="CHEBI:58702"/>
        <dbReference type="ChEBI" id="CHEBI:145989"/>
        <dbReference type="EC" id="2.5.1.19"/>
    </reaction>
    <physiologicalReaction direction="left-to-right" evidence="1">
        <dbReference type="Rhea" id="RHEA:21257"/>
    </physiologicalReaction>
</comment>
<comment type="pathway">
    <text evidence="1">Metabolic intermediate biosynthesis; chorismate biosynthesis; chorismate from D-erythrose 4-phosphate and phosphoenolpyruvate: step 6/7.</text>
</comment>
<comment type="subunit">
    <text evidence="1">Monomer.</text>
</comment>
<comment type="subcellular location">
    <subcellularLocation>
        <location evidence="1">Cytoplasm</location>
    </subcellularLocation>
</comment>
<comment type="similarity">
    <text evidence="1">Belongs to the EPSP synthase family.</text>
</comment>
<evidence type="ECO:0000255" key="1">
    <source>
        <dbReference type="HAMAP-Rule" id="MF_00210"/>
    </source>
</evidence>
<keyword id="KW-0028">Amino-acid biosynthesis</keyword>
<keyword id="KW-0057">Aromatic amino acid biosynthesis</keyword>
<keyword id="KW-0963">Cytoplasm</keyword>
<keyword id="KW-0808">Transferase</keyword>
<sequence length="426" mass="45676">MKQLRLEPVVQVRGEINIPGSKSISNRALLLATLAKGTTTLTNLLDSDDIRHMLASLKQLGVEYRLSQNNTVCELTGLGGVISSDTAQTLFLGNAGTAMRPLCAALTLGRGEFTLTGEPRMEERPIGDLVDALKQLGANIVYLKNDGFPPLTINATGLNGGDVEIAGDLSSQFLTALLMVAPLAKGSVNIHVKGELVSKPYIDITLALMAQFGVQVINHDYARFEIPAGQQYVSPGKVLVEGDASSASYFLAAGAIKGGEVKVTGVGRLSIQGDVKFADVLEKMGADIEWGDDYIIARGAPLTAVDLDMNHIPDAAMTIATAALFAKGTTTIRNIYNWRIKETDRLAAMATELRKVGALVEEGHDYIQITPPVVLNTAEIDTYNDHRMAMCFSMMAFADCGITINDPDCTSKTFPDYFAQFASLKA</sequence>
<name>AROA_SHESA</name>
<dbReference type="EC" id="2.5.1.19" evidence="1"/>
<dbReference type="EMBL" id="CP000469">
    <property type="protein sequence ID" value="ABK48206.1"/>
    <property type="molecule type" value="Genomic_DNA"/>
</dbReference>
<dbReference type="RefSeq" id="WP_011716970.1">
    <property type="nucleotide sequence ID" value="NC_008577.1"/>
</dbReference>
<dbReference type="SMR" id="A0KWN7"/>
<dbReference type="STRING" id="94122.Shewana3_1975"/>
<dbReference type="KEGG" id="shn:Shewana3_1975"/>
<dbReference type="eggNOG" id="COG0128">
    <property type="taxonomic scope" value="Bacteria"/>
</dbReference>
<dbReference type="HOGENOM" id="CLU_024321_0_0_6"/>
<dbReference type="OrthoDB" id="9809920at2"/>
<dbReference type="UniPathway" id="UPA00053">
    <property type="reaction ID" value="UER00089"/>
</dbReference>
<dbReference type="Proteomes" id="UP000002589">
    <property type="component" value="Chromosome"/>
</dbReference>
<dbReference type="GO" id="GO:0005737">
    <property type="term" value="C:cytoplasm"/>
    <property type="evidence" value="ECO:0007669"/>
    <property type="project" value="UniProtKB-SubCell"/>
</dbReference>
<dbReference type="GO" id="GO:0003866">
    <property type="term" value="F:3-phosphoshikimate 1-carboxyvinyltransferase activity"/>
    <property type="evidence" value="ECO:0007669"/>
    <property type="project" value="UniProtKB-UniRule"/>
</dbReference>
<dbReference type="GO" id="GO:0008652">
    <property type="term" value="P:amino acid biosynthetic process"/>
    <property type="evidence" value="ECO:0007669"/>
    <property type="project" value="UniProtKB-KW"/>
</dbReference>
<dbReference type="GO" id="GO:0009073">
    <property type="term" value="P:aromatic amino acid family biosynthetic process"/>
    <property type="evidence" value="ECO:0007669"/>
    <property type="project" value="UniProtKB-KW"/>
</dbReference>
<dbReference type="GO" id="GO:0009423">
    <property type="term" value="P:chorismate biosynthetic process"/>
    <property type="evidence" value="ECO:0007669"/>
    <property type="project" value="UniProtKB-UniRule"/>
</dbReference>
<dbReference type="CDD" id="cd01556">
    <property type="entry name" value="EPSP_synthase"/>
    <property type="match status" value="1"/>
</dbReference>
<dbReference type="FunFam" id="3.65.10.10:FF:000003">
    <property type="entry name" value="3-phosphoshikimate 1-carboxyvinyltransferase"/>
    <property type="match status" value="1"/>
</dbReference>
<dbReference type="FunFam" id="3.65.10.10:FF:000004">
    <property type="entry name" value="3-phosphoshikimate 1-carboxyvinyltransferase"/>
    <property type="match status" value="1"/>
</dbReference>
<dbReference type="Gene3D" id="3.65.10.10">
    <property type="entry name" value="Enolpyruvate transferase domain"/>
    <property type="match status" value="2"/>
</dbReference>
<dbReference type="HAMAP" id="MF_00210">
    <property type="entry name" value="EPSP_synth"/>
    <property type="match status" value="1"/>
</dbReference>
<dbReference type="InterPro" id="IPR001986">
    <property type="entry name" value="Enolpyruvate_Tfrase_dom"/>
</dbReference>
<dbReference type="InterPro" id="IPR036968">
    <property type="entry name" value="Enolpyruvate_Tfrase_sf"/>
</dbReference>
<dbReference type="InterPro" id="IPR006264">
    <property type="entry name" value="EPSP_synthase"/>
</dbReference>
<dbReference type="InterPro" id="IPR023193">
    <property type="entry name" value="EPSP_synthase_CS"/>
</dbReference>
<dbReference type="InterPro" id="IPR013792">
    <property type="entry name" value="RNA3'P_cycl/enolpyr_Trfase_a/b"/>
</dbReference>
<dbReference type="NCBIfam" id="TIGR01356">
    <property type="entry name" value="aroA"/>
    <property type="match status" value="1"/>
</dbReference>
<dbReference type="PANTHER" id="PTHR21090">
    <property type="entry name" value="AROM/DEHYDROQUINATE SYNTHASE"/>
    <property type="match status" value="1"/>
</dbReference>
<dbReference type="PANTHER" id="PTHR21090:SF5">
    <property type="entry name" value="PENTAFUNCTIONAL AROM POLYPEPTIDE"/>
    <property type="match status" value="1"/>
</dbReference>
<dbReference type="Pfam" id="PF00275">
    <property type="entry name" value="EPSP_synthase"/>
    <property type="match status" value="1"/>
</dbReference>
<dbReference type="PIRSF" id="PIRSF000505">
    <property type="entry name" value="EPSPS"/>
    <property type="match status" value="1"/>
</dbReference>
<dbReference type="SUPFAM" id="SSF55205">
    <property type="entry name" value="EPT/RTPC-like"/>
    <property type="match status" value="1"/>
</dbReference>
<dbReference type="PROSITE" id="PS00104">
    <property type="entry name" value="EPSP_SYNTHASE_1"/>
    <property type="match status" value="1"/>
</dbReference>
<dbReference type="PROSITE" id="PS00885">
    <property type="entry name" value="EPSP_SYNTHASE_2"/>
    <property type="match status" value="1"/>
</dbReference>
<reference key="1">
    <citation type="submission" date="2006-09" db="EMBL/GenBank/DDBJ databases">
        <title>Complete sequence of chromosome 1 of Shewanella sp. ANA-3.</title>
        <authorList>
            <person name="Copeland A."/>
            <person name="Lucas S."/>
            <person name="Lapidus A."/>
            <person name="Barry K."/>
            <person name="Detter J.C."/>
            <person name="Glavina del Rio T."/>
            <person name="Hammon N."/>
            <person name="Israni S."/>
            <person name="Dalin E."/>
            <person name="Tice H."/>
            <person name="Pitluck S."/>
            <person name="Chertkov O."/>
            <person name="Brettin T."/>
            <person name="Bruce D."/>
            <person name="Han C."/>
            <person name="Tapia R."/>
            <person name="Gilna P."/>
            <person name="Schmutz J."/>
            <person name="Larimer F."/>
            <person name="Land M."/>
            <person name="Hauser L."/>
            <person name="Kyrpides N."/>
            <person name="Kim E."/>
            <person name="Newman D."/>
            <person name="Salticov C."/>
            <person name="Konstantinidis K."/>
            <person name="Klappenback J."/>
            <person name="Tiedje J."/>
            <person name="Richardson P."/>
        </authorList>
    </citation>
    <scope>NUCLEOTIDE SEQUENCE [LARGE SCALE GENOMIC DNA]</scope>
    <source>
        <strain>ANA-3</strain>
    </source>
</reference>
<proteinExistence type="inferred from homology"/>
<feature type="chain" id="PRO_1000012474" description="3-phosphoshikimate 1-carboxyvinyltransferase">
    <location>
        <begin position="1"/>
        <end position="426"/>
    </location>
</feature>
<feature type="active site" description="Proton acceptor" evidence="1">
    <location>
        <position position="314"/>
    </location>
</feature>
<feature type="binding site" evidence="1">
    <location>
        <position position="22"/>
    </location>
    <ligand>
        <name>3-phosphoshikimate</name>
        <dbReference type="ChEBI" id="CHEBI:145989"/>
    </ligand>
</feature>
<feature type="binding site" evidence="1">
    <location>
        <position position="22"/>
    </location>
    <ligand>
        <name>phosphoenolpyruvate</name>
        <dbReference type="ChEBI" id="CHEBI:58702"/>
    </ligand>
</feature>
<feature type="binding site" evidence="1">
    <location>
        <position position="23"/>
    </location>
    <ligand>
        <name>3-phosphoshikimate</name>
        <dbReference type="ChEBI" id="CHEBI:145989"/>
    </ligand>
</feature>
<feature type="binding site" evidence="1">
    <location>
        <position position="27"/>
    </location>
    <ligand>
        <name>3-phosphoshikimate</name>
        <dbReference type="ChEBI" id="CHEBI:145989"/>
    </ligand>
</feature>
<feature type="binding site" evidence="1">
    <location>
        <position position="96"/>
    </location>
    <ligand>
        <name>phosphoenolpyruvate</name>
        <dbReference type="ChEBI" id="CHEBI:58702"/>
    </ligand>
</feature>
<feature type="binding site" evidence="1">
    <location>
        <position position="124"/>
    </location>
    <ligand>
        <name>phosphoenolpyruvate</name>
        <dbReference type="ChEBI" id="CHEBI:58702"/>
    </ligand>
</feature>
<feature type="binding site" evidence="1">
    <location>
        <position position="170"/>
    </location>
    <ligand>
        <name>3-phosphoshikimate</name>
        <dbReference type="ChEBI" id="CHEBI:145989"/>
    </ligand>
</feature>
<feature type="binding site" evidence="1">
    <location>
        <position position="171"/>
    </location>
    <ligand>
        <name>3-phosphoshikimate</name>
        <dbReference type="ChEBI" id="CHEBI:145989"/>
    </ligand>
</feature>
<feature type="binding site" evidence="1">
    <location>
        <position position="172"/>
    </location>
    <ligand>
        <name>3-phosphoshikimate</name>
        <dbReference type="ChEBI" id="CHEBI:145989"/>
    </ligand>
</feature>
<feature type="binding site" evidence="1">
    <location>
        <position position="172"/>
    </location>
    <ligand>
        <name>phosphoenolpyruvate</name>
        <dbReference type="ChEBI" id="CHEBI:58702"/>
    </ligand>
</feature>
<feature type="binding site" evidence="1">
    <location>
        <position position="198"/>
    </location>
    <ligand>
        <name>3-phosphoshikimate</name>
        <dbReference type="ChEBI" id="CHEBI:145989"/>
    </ligand>
</feature>
<feature type="binding site" evidence="1">
    <location>
        <position position="314"/>
    </location>
    <ligand>
        <name>3-phosphoshikimate</name>
        <dbReference type="ChEBI" id="CHEBI:145989"/>
    </ligand>
</feature>
<feature type="binding site" evidence="1">
    <location>
        <position position="337"/>
    </location>
    <ligand>
        <name>3-phosphoshikimate</name>
        <dbReference type="ChEBI" id="CHEBI:145989"/>
    </ligand>
</feature>
<feature type="binding site" evidence="1">
    <location>
        <position position="341"/>
    </location>
    <ligand>
        <name>3-phosphoshikimate</name>
        <dbReference type="ChEBI" id="CHEBI:145989"/>
    </ligand>
</feature>
<feature type="binding site" evidence="1">
    <location>
        <position position="345"/>
    </location>
    <ligand>
        <name>phosphoenolpyruvate</name>
        <dbReference type="ChEBI" id="CHEBI:58702"/>
    </ligand>
</feature>
<feature type="binding site" evidence="1">
    <location>
        <position position="387"/>
    </location>
    <ligand>
        <name>phosphoenolpyruvate</name>
        <dbReference type="ChEBI" id="CHEBI:58702"/>
    </ligand>
</feature>
<feature type="binding site" evidence="1">
    <location>
        <position position="412"/>
    </location>
    <ligand>
        <name>phosphoenolpyruvate</name>
        <dbReference type="ChEBI" id="CHEBI:58702"/>
    </ligand>
</feature>